<dbReference type="EMBL" id="GG704912">
    <property type="protein sequence ID" value="EAS30867.1"/>
    <property type="molecule type" value="Genomic_DNA"/>
</dbReference>
<dbReference type="RefSeq" id="XP_001242450.1">
    <property type="nucleotide sequence ID" value="XM_001242449.2"/>
</dbReference>
<dbReference type="SMR" id="Q1DTL7"/>
<dbReference type="FunCoup" id="Q1DTL7">
    <property type="interactions" value="1253"/>
</dbReference>
<dbReference type="STRING" id="246410.Q1DTL7"/>
<dbReference type="GeneID" id="4562091"/>
<dbReference type="KEGG" id="cim:CIMG_06346"/>
<dbReference type="VEuPathDB" id="FungiDB:CIMG_06346"/>
<dbReference type="InParanoid" id="Q1DTL7"/>
<dbReference type="OMA" id="TRFKGHE"/>
<dbReference type="OrthoDB" id="9834376at2759"/>
<dbReference type="Proteomes" id="UP000001261">
    <property type="component" value="Unassembled WGS sequence"/>
</dbReference>
<dbReference type="GO" id="GO:0022627">
    <property type="term" value="C:cytosolic small ribosomal subunit"/>
    <property type="evidence" value="ECO:0007669"/>
    <property type="project" value="UniProtKB-UniRule"/>
</dbReference>
<dbReference type="GO" id="GO:0003735">
    <property type="term" value="F:structural constituent of ribosome"/>
    <property type="evidence" value="ECO:0007669"/>
    <property type="project" value="UniProtKB-UniRule"/>
</dbReference>
<dbReference type="GO" id="GO:0006412">
    <property type="term" value="P:translation"/>
    <property type="evidence" value="ECO:0007669"/>
    <property type="project" value="UniProtKB-UniRule"/>
</dbReference>
<dbReference type="HAMAP" id="MF_03122">
    <property type="entry name" value="Ribosomal_eS1_euk"/>
    <property type="match status" value="1"/>
</dbReference>
<dbReference type="InterPro" id="IPR001593">
    <property type="entry name" value="Ribosomal_eS1"/>
</dbReference>
<dbReference type="InterPro" id="IPR018281">
    <property type="entry name" value="Ribosomal_eS1_CS"/>
</dbReference>
<dbReference type="InterPro" id="IPR027500">
    <property type="entry name" value="Ribosomal_eS1_euk"/>
</dbReference>
<dbReference type="PANTHER" id="PTHR11830">
    <property type="entry name" value="40S RIBOSOMAL PROTEIN S3A"/>
    <property type="match status" value="1"/>
</dbReference>
<dbReference type="Pfam" id="PF01015">
    <property type="entry name" value="Ribosomal_S3Ae"/>
    <property type="match status" value="1"/>
</dbReference>
<dbReference type="SMART" id="SM01397">
    <property type="entry name" value="Ribosomal_S3Ae"/>
    <property type="match status" value="1"/>
</dbReference>
<dbReference type="PROSITE" id="PS01191">
    <property type="entry name" value="RIBOSOMAL_S3AE"/>
    <property type="match status" value="1"/>
</dbReference>
<keyword id="KW-0007">Acetylation</keyword>
<keyword id="KW-0963">Cytoplasm</keyword>
<keyword id="KW-1185">Reference proteome</keyword>
<keyword id="KW-0687">Ribonucleoprotein</keyword>
<keyword id="KW-0689">Ribosomal protein</keyword>
<accession>Q1DTL7</accession>
<accession>A0A0D6K9N8</accession>
<accession>I9NQ98</accession>
<feature type="initiator methionine" description="Removed" evidence="1">
    <location>
        <position position="1"/>
    </location>
</feature>
<feature type="chain" id="PRO_0000389370" description="Small ribosomal subunit protein eS1">
    <location>
        <begin position="2"/>
        <end position="255"/>
    </location>
</feature>
<feature type="region of interest" description="Disordered" evidence="2">
    <location>
        <begin position="1"/>
        <end position="20"/>
    </location>
</feature>
<feature type="compositionally biased region" description="Basic residues" evidence="2">
    <location>
        <begin position="1"/>
        <end position="18"/>
    </location>
</feature>
<feature type="modified residue" description="N-acetylalanine; partial" evidence="1">
    <location>
        <position position="2"/>
    </location>
</feature>
<organism>
    <name type="scientific">Coccidioides immitis (strain RS)</name>
    <name type="common">Valley fever fungus</name>
    <dbReference type="NCBI Taxonomy" id="246410"/>
    <lineage>
        <taxon>Eukaryota</taxon>
        <taxon>Fungi</taxon>
        <taxon>Dikarya</taxon>
        <taxon>Ascomycota</taxon>
        <taxon>Pezizomycotina</taxon>
        <taxon>Eurotiomycetes</taxon>
        <taxon>Eurotiomycetidae</taxon>
        <taxon>Onygenales</taxon>
        <taxon>Onygenaceae</taxon>
        <taxon>Coccidioides</taxon>
    </lineage>
</organism>
<reference key="1">
    <citation type="journal article" date="2009" name="Genome Res.">
        <title>Comparative genomic analyses of the human fungal pathogens Coccidioides and their relatives.</title>
        <authorList>
            <person name="Sharpton T.J."/>
            <person name="Stajich J.E."/>
            <person name="Rounsley S.D."/>
            <person name="Gardner M.J."/>
            <person name="Wortman J.R."/>
            <person name="Jordar V.S."/>
            <person name="Maiti R."/>
            <person name="Kodira C.D."/>
            <person name="Neafsey D.E."/>
            <person name="Zeng Q."/>
            <person name="Hung C.-Y."/>
            <person name="McMahan C."/>
            <person name="Muszewska A."/>
            <person name="Grynberg M."/>
            <person name="Mandel M.A."/>
            <person name="Kellner E.M."/>
            <person name="Barker B.M."/>
            <person name="Galgiani J.N."/>
            <person name="Orbach M.J."/>
            <person name="Kirkland T.N."/>
            <person name="Cole G.T."/>
            <person name="Henn M.R."/>
            <person name="Birren B.W."/>
            <person name="Taylor J.W."/>
        </authorList>
    </citation>
    <scope>NUCLEOTIDE SEQUENCE [LARGE SCALE GENOMIC DNA]</scope>
    <source>
        <strain>RS</strain>
    </source>
</reference>
<reference key="2">
    <citation type="journal article" date="2010" name="Genome Res.">
        <title>Population genomic sequencing of Coccidioides fungi reveals recent hybridization and transposon control.</title>
        <authorList>
            <person name="Neafsey D.E."/>
            <person name="Barker B.M."/>
            <person name="Sharpton T.J."/>
            <person name="Stajich J.E."/>
            <person name="Park D.J."/>
            <person name="Whiston E."/>
            <person name="Hung C.-Y."/>
            <person name="McMahan C."/>
            <person name="White J."/>
            <person name="Sykes S."/>
            <person name="Heiman D."/>
            <person name="Young S."/>
            <person name="Zeng Q."/>
            <person name="Abouelleil A."/>
            <person name="Aftuck L."/>
            <person name="Bessette D."/>
            <person name="Brown A."/>
            <person name="FitzGerald M."/>
            <person name="Lui A."/>
            <person name="Macdonald J.P."/>
            <person name="Priest M."/>
            <person name="Orbach M.J."/>
            <person name="Galgiani J.N."/>
            <person name="Kirkland T.N."/>
            <person name="Cole G.T."/>
            <person name="Birren B.W."/>
            <person name="Henn M.R."/>
            <person name="Taylor J.W."/>
            <person name="Rounsley S.D."/>
        </authorList>
    </citation>
    <scope>GENOME REANNOTATION</scope>
    <source>
        <strain>RS</strain>
    </source>
</reference>
<evidence type="ECO:0000255" key="1">
    <source>
        <dbReference type="HAMAP-Rule" id="MF_03122"/>
    </source>
</evidence>
<evidence type="ECO:0000256" key="2">
    <source>
        <dbReference type="SAM" id="MobiDB-lite"/>
    </source>
</evidence>
<evidence type="ECO:0000305" key="3"/>
<name>RS3A_COCIM</name>
<gene>
    <name evidence="1" type="primary">RPS1</name>
    <name type="ORF">CIMG_06346</name>
</gene>
<proteinExistence type="inferred from homology"/>
<protein>
    <recommendedName>
        <fullName evidence="1">Small ribosomal subunit protein eS1</fullName>
    </recommendedName>
    <alternativeName>
        <fullName evidence="3">40S ribosomal protein S1</fullName>
    </alternativeName>
</protein>
<sequence length="255" mass="29087">MAVGKNKRLSKGKKGLKKRVQDPFSRKDEYLVKAPSTFAVRDVGKTIVNRTTGLKNANDSLKGRIFEVSLADLQNDQAHSFRKIKLRVDEVQGKNCLTNFHGMDFTSDKLRSLVRKWQSLIEANVTVKTTDDYLVRLFAIAFTKRRSFQVKKTTYARSSQIRAIRKKMVEIIQREASSRTLTQLTKLVPEVIGREIEKATRGIYPLQNVHIRKVKLLKQPKFDLGGLLALHGEASTDDKGQKVEREFTEQVLESV</sequence>
<comment type="subunit">
    <text evidence="1">Component of the small ribosomal subunit. Mature ribosomes consist of a small (40S) and a large (60S) subunit. The 40S subunit contains about 33 different proteins and 1 molecule of RNA (18S). The 60S subunit contains about 49 different proteins and 3 molecules of RNA (25S, 5.8S and 5S).</text>
</comment>
<comment type="subcellular location">
    <subcellularLocation>
        <location evidence="1">Cytoplasm</location>
    </subcellularLocation>
</comment>
<comment type="similarity">
    <text evidence="1">Belongs to the eukaryotic ribosomal protein eS1 family.</text>
</comment>